<name>SYM_HAEIE</name>
<comment type="function">
    <text evidence="1">Is required not only for elongation of protein synthesis but also for the initiation of all mRNA translation through initiator tRNA(fMet) aminoacylation.</text>
</comment>
<comment type="catalytic activity">
    <reaction evidence="1">
        <text>tRNA(Met) + L-methionine + ATP = L-methionyl-tRNA(Met) + AMP + diphosphate</text>
        <dbReference type="Rhea" id="RHEA:13481"/>
        <dbReference type="Rhea" id="RHEA-COMP:9667"/>
        <dbReference type="Rhea" id="RHEA-COMP:9698"/>
        <dbReference type="ChEBI" id="CHEBI:30616"/>
        <dbReference type="ChEBI" id="CHEBI:33019"/>
        <dbReference type="ChEBI" id="CHEBI:57844"/>
        <dbReference type="ChEBI" id="CHEBI:78442"/>
        <dbReference type="ChEBI" id="CHEBI:78530"/>
        <dbReference type="ChEBI" id="CHEBI:456215"/>
        <dbReference type="EC" id="6.1.1.10"/>
    </reaction>
</comment>
<comment type="cofactor">
    <cofactor evidence="1">
        <name>Zn(2+)</name>
        <dbReference type="ChEBI" id="CHEBI:29105"/>
    </cofactor>
    <text evidence="1">Binds 1 zinc ion per subunit.</text>
</comment>
<comment type="subunit">
    <text evidence="1">Homodimer.</text>
</comment>
<comment type="subcellular location">
    <subcellularLocation>
        <location evidence="1">Cytoplasm</location>
    </subcellularLocation>
</comment>
<comment type="similarity">
    <text evidence="1">Belongs to the class-I aminoacyl-tRNA synthetase family. MetG type 1 subfamily.</text>
</comment>
<protein>
    <recommendedName>
        <fullName evidence="1">Methionine--tRNA ligase</fullName>
        <ecNumber evidence="1">6.1.1.10</ecNumber>
    </recommendedName>
    <alternativeName>
        <fullName evidence="1">Methionyl-tRNA synthetase</fullName>
        <shortName evidence="1">MetRS</shortName>
    </alternativeName>
</protein>
<evidence type="ECO:0000255" key="1">
    <source>
        <dbReference type="HAMAP-Rule" id="MF_00098"/>
    </source>
</evidence>
<sequence>MTTQPRKILVTCALPYANGAIHLGHMLEHIQADIWVRFQRMRGNKIHFVCADDAHGTPIMLNADKLGITPEELIAKAKADHMRDFAGFNISFDNYHSTHSEENKQLTAEIYNKLKANGFIKSKVISQLFDPEKNMFLPDRFVKGTCPKCKAEDQYGDNCEVCASTYSPMDLINPRSAVSGTTPIVKESEHFFFDLPAFEGMLKEWTRSGSLQSEIANKMQEWFESGLQQWDISRDTPYFGFEIPGVKDKFFYVWLDAPIGYMASFKNLCNREGIDFNEFWAEGSDAELYHFIGKDIVYFHSLFWPAMLEGSGYRKPTNVFAHGYVTVDGAKMSKSRGTFIQASTYLNHIDPECLRYYYAAKLNDRIEDLDFNLEDFVQRVNTDIVNKLVNLASRNAGFIAKRFEGKLADKLEDEALFAEFTAQAEQIAAYYESREYNKAIREIMALTDKANKYIDEKAPWVIAKEEGKEAELQAVCSMGIELFRVLMSYLKPVLPKLAERAETFLQAELRWDNIHQPLLGHTLAPFKALFSRLEKKQIDAVVEETKALFAAANKAAEKTEAKPTALSTVEPIAETITIDDFAKLDMRVAKVLKCEAVPESNKLLRFELDLGDHTRQVFSSIKAAYNKPEELEGRFVIMVANLAPRKMKFGVSEGMILSAGTGGSDLFLLSADSGVTAGMQVK</sequence>
<dbReference type="EC" id="6.1.1.10" evidence="1"/>
<dbReference type="EMBL" id="CP000671">
    <property type="protein sequence ID" value="ABQ98229.1"/>
    <property type="molecule type" value="Genomic_DNA"/>
</dbReference>
<dbReference type="SMR" id="A5UBS8"/>
<dbReference type="KEGG" id="hip:CGSHiEE_04120"/>
<dbReference type="HOGENOM" id="CLU_009710_7_0_6"/>
<dbReference type="GO" id="GO:0005829">
    <property type="term" value="C:cytosol"/>
    <property type="evidence" value="ECO:0007669"/>
    <property type="project" value="TreeGrafter"/>
</dbReference>
<dbReference type="GO" id="GO:0005524">
    <property type="term" value="F:ATP binding"/>
    <property type="evidence" value="ECO:0007669"/>
    <property type="project" value="UniProtKB-UniRule"/>
</dbReference>
<dbReference type="GO" id="GO:0046872">
    <property type="term" value="F:metal ion binding"/>
    <property type="evidence" value="ECO:0007669"/>
    <property type="project" value="UniProtKB-KW"/>
</dbReference>
<dbReference type="GO" id="GO:0004825">
    <property type="term" value="F:methionine-tRNA ligase activity"/>
    <property type="evidence" value="ECO:0007669"/>
    <property type="project" value="UniProtKB-UniRule"/>
</dbReference>
<dbReference type="GO" id="GO:0000049">
    <property type="term" value="F:tRNA binding"/>
    <property type="evidence" value="ECO:0007669"/>
    <property type="project" value="UniProtKB-KW"/>
</dbReference>
<dbReference type="GO" id="GO:0006431">
    <property type="term" value="P:methionyl-tRNA aminoacylation"/>
    <property type="evidence" value="ECO:0007669"/>
    <property type="project" value="UniProtKB-UniRule"/>
</dbReference>
<dbReference type="CDD" id="cd07957">
    <property type="entry name" value="Anticodon_Ia_Met"/>
    <property type="match status" value="1"/>
</dbReference>
<dbReference type="CDD" id="cd00814">
    <property type="entry name" value="MetRS_core"/>
    <property type="match status" value="1"/>
</dbReference>
<dbReference type="CDD" id="cd02800">
    <property type="entry name" value="tRNA_bind_EcMetRS_like"/>
    <property type="match status" value="1"/>
</dbReference>
<dbReference type="FunFam" id="1.10.730.10:FF:000005">
    <property type="entry name" value="Methionine--tRNA ligase"/>
    <property type="match status" value="1"/>
</dbReference>
<dbReference type="FunFam" id="2.20.28.20:FF:000001">
    <property type="entry name" value="Methionine--tRNA ligase"/>
    <property type="match status" value="1"/>
</dbReference>
<dbReference type="FunFam" id="2.40.50.140:FF:000042">
    <property type="entry name" value="Methionine--tRNA ligase"/>
    <property type="match status" value="1"/>
</dbReference>
<dbReference type="Gene3D" id="3.40.50.620">
    <property type="entry name" value="HUPs"/>
    <property type="match status" value="1"/>
</dbReference>
<dbReference type="Gene3D" id="1.10.730.10">
    <property type="entry name" value="Isoleucyl-tRNA Synthetase, Domain 1"/>
    <property type="match status" value="1"/>
</dbReference>
<dbReference type="Gene3D" id="2.20.28.20">
    <property type="entry name" value="Methionyl-tRNA synthetase, Zn-domain"/>
    <property type="match status" value="1"/>
</dbReference>
<dbReference type="Gene3D" id="2.40.50.140">
    <property type="entry name" value="Nucleic acid-binding proteins"/>
    <property type="match status" value="1"/>
</dbReference>
<dbReference type="HAMAP" id="MF_00098">
    <property type="entry name" value="Met_tRNA_synth_type1"/>
    <property type="match status" value="1"/>
</dbReference>
<dbReference type="InterPro" id="IPR001412">
    <property type="entry name" value="aa-tRNA-synth_I_CS"/>
</dbReference>
<dbReference type="InterPro" id="IPR041872">
    <property type="entry name" value="Anticodon_Met"/>
</dbReference>
<dbReference type="InterPro" id="IPR004495">
    <property type="entry name" value="Met-tRNA-synth_bsu_C"/>
</dbReference>
<dbReference type="InterPro" id="IPR023458">
    <property type="entry name" value="Met-tRNA_ligase_1"/>
</dbReference>
<dbReference type="InterPro" id="IPR014758">
    <property type="entry name" value="Met-tRNA_synth"/>
</dbReference>
<dbReference type="InterPro" id="IPR015413">
    <property type="entry name" value="Methionyl/Leucyl_tRNA_Synth"/>
</dbReference>
<dbReference type="InterPro" id="IPR033911">
    <property type="entry name" value="MetRS_core"/>
</dbReference>
<dbReference type="InterPro" id="IPR029038">
    <property type="entry name" value="MetRS_Zn"/>
</dbReference>
<dbReference type="InterPro" id="IPR012340">
    <property type="entry name" value="NA-bd_OB-fold"/>
</dbReference>
<dbReference type="InterPro" id="IPR014729">
    <property type="entry name" value="Rossmann-like_a/b/a_fold"/>
</dbReference>
<dbReference type="InterPro" id="IPR002547">
    <property type="entry name" value="tRNA-bd_dom"/>
</dbReference>
<dbReference type="InterPro" id="IPR009080">
    <property type="entry name" value="tRNAsynth_Ia_anticodon-bd"/>
</dbReference>
<dbReference type="NCBIfam" id="TIGR00398">
    <property type="entry name" value="metG"/>
    <property type="match status" value="1"/>
</dbReference>
<dbReference type="NCBIfam" id="TIGR00399">
    <property type="entry name" value="metG_C_term"/>
    <property type="match status" value="1"/>
</dbReference>
<dbReference type="NCBIfam" id="NF001100">
    <property type="entry name" value="PRK00133.1"/>
    <property type="match status" value="1"/>
</dbReference>
<dbReference type="PANTHER" id="PTHR45765">
    <property type="entry name" value="METHIONINE--TRNA LIGASE"/>
    <property type="match status" value="1"/>
</dbReference>
<dbReference type="PANTHER" id="PTHR45765:SF1">
    <property type="entry name" value="METHIONINE--TRNA LIGASE, CYTOPLASMIC"/>
    <property type="match status" value="1"/>
</dbReference>
<dbReference type="Pfam" id="PF19303">
    <property type="entry name" value="Anticodon_3"/>
    <property type="match status" value="1"/>
</dbReference>
<dbReference type="Pfam" id="PF09334">
    <property type="entry name" value="tRNA-synt_1g"/>
    <property type="match status" value="1"/>
</dbReference>
<dbReference type="Pfam" id="PF01588">
    <property type="entry name" value="tRNA_bind"/>
    <property type="match status" value="1"/>
</dbReference>
<dbReference type="PRINTS" id="PR01041">
    <property type="entry name" value="TRNASYNTHMET"/>
</dbReference>
<dbReference type="SUPFAM" id="SSF47323">
    <property type="entry name" value="Anticodon-binding domain of a subclass of class I aminoacyl-tRNA synthetases"/>
    <property type="match status" value="1"/>
</dbReference>
<dbReference type="SUPFAM" id="SSF57770">
    <property type="entry name" value="Methionyl-tRNA synthetase (MetRS), Zn-domain"/>
    <property type="match status" value="1"/>
</dbReference>
<dbReference type="SUPFAM" id="SSF50249">
    <property type="entry name" value="Nucleic acid-binding proteins"/>
    <property type="match status" value="1"/>
</dbReference>
<dbReference type="SUPFAM" id="SSF52374">
    <property type="entry name" value="Nucleotidylyl transferase"/>
    <property type="match status" value="1"/>
</dbReference>
<dbReference type="PROSITE" id="PS00178">
    <property type="entry name" value="AA_TRNA_LIGASE_I"/>
    <property type="match status" value="1"/>
</dbReference>
<dbReference type="PROSITE" id="PS50886">
    <property type="entry name" value="TRBD"/>
    <property type="match status" value="1"/>
</dbReference>
<gene>
    <name evidence="1" type="primary">metG</name>
    <name type="ordered locus">CGSHiEE_04120</name>
</gene>
<keyword id="KW-0030">Aminoacyl-tRNA synthetase</keyword>
<keyword id="KW-0067">ATP-binding</keyword>
<keyword id="KW-0963">Cytoplasm</keyword>
<keyword id="KW-0436">Ligase</keyword>
<keyword id="KW-0479">Metal-binding</keyword>
<keyword id="KW-0547">Nucleotide-binding</keyword>
<keyword id="KW-0648">Protein biosynthesis</keyword>
<keyword id="KW-0694">RNA-binding</keyword>
<keyword id="KW-0820">tRNA-binding</keyword>
<keyword id="KW-0862">Zinc</keyword>
<accession>A5UBS8</accession>
<feature type="chain" id="PRO_0000331833" description="Methionine--tRNA ligase">
    <location>
        <begin position="1"/>
        <end position="682"/>
    </location>
</feature>
<feature type="domain" description="tRNA-binding" evidence="1">
    <location>
        <begin position="580"/>
        <end position="682"/>
    </location>
</feature>
<feature type="short sequence motif" description="'HIGH' region">
    <location>
        <begin position="15"/>
        <end position="25"/>
    </location>
</feature>
<feature type="short sequence motif" description="'KMSKS' region">
    <location>
        <begin position="331"/>
        <end position="335"/>
    </location>
</feature>
<feature type="binding site" evidence="1">
    <location>
        <position position="146"/>
    </location>
    <ligand>
        <name>Zn(2+)</name>
        <dbReference type="ChEBI" id="CHEBI:29105"/>
    </ligand>
</feature>
<feature type="binding site" evidence="1">
    <location>
        <position position="149"/>
    </location>
    <ligand>
        <name>Zn(2+)</name>
        <dbReference type="ChEBI" id="CHEBI:29105"/>
    </ligand>
</feature>
<feature type="binding site" evidence="1">
    <location>
        <position position="159"/>
    </location>
    <ligand>
        <name>Zn(2+)</name>
        <dbReference type="ChEBI" id="CHEBI:29105"/>
    </ligand>
</feature>
<feature type="binding site" evidence="1">
    <location>
        <position position="162"/>
    </location>
    <ligand>
        <name>Zn(2+)</name>
        <dbReference type="ChEBI" id="CHEBI:29105"/>
    </ligand>
</feature>
<feature type="binding site" evidence="1">
    <location>
        <position position="334"/>
    </location>
    <ligand>
        <name>ATP</name>
        <dbReference type="ChEBI" id="CHEBI:30616"/>
    </ligand>
</feature>
<organism>
    <name type="scientific">Haemophilus influenzae (strain PittEE)</name>
    <dbReference type="NCBI Taxonomy" id="374930"/>
    <lineage>
        <taxon>Bacteria</taxon>
        <taxon>Pseudomonadati</taxon>
        <taxon>Pseudomonadota</taxon>
        <taxon>Gammaproteobacteria</taxon>
        <taxon>Pasteurellales</taxon>
        <taxon>Pasteurellaceae</taxon>
        <taxon>Haemophilus</taxon>
    </lineage>
</organism>
<reference key="1">
    <citation type="journal article" date="2007" name="Genome Biol.">
        <title>Characterization and modeling of the Haemophilus influenzae core and supragenomes based on the complete genomic sequences of Rd and 12 clinical nontypeable strains.</title>
        <authorList>
            <person name="Hogg J.S."/>
            <person name="Hu F.Z."/>
            <person name="Janto B."/>
            <person name="Boissy R."/>
            <person name="Hayes J."/>
            <person name="Keefe R."/>
            <person name="Post J.C."/>
            <person name="Ehrlich G.D."/>
        </authorList>
    </citation>
    <scope>NUCLEOTIDE SEQUENCE [LARGE SCALE GENOMIC DNA]</scope>
    <source>
        <strain>PittEE</strain>
    </source>
</reference>
<proteinExistence type="inferred from homology"/>